<proteinExistence type="inferred from homology"/>
<reference key="1">
    <citation type="journal article" date="2005" name="Nature">
        <title>Genome sequencing and analysis of Aspergillus oryzae.</title>
        <authorList>
            <person name="Machida M."/>
            <person name="Asai K."/>
            <person name="Sano M."/>
            <person name="Tanaka T."/>
            <person name="Kumagai T."/>
            <person name="Terai G."/>
            <person name="Kusumoto K."/>
            <person name="Arima T."/>
            <person name="Akita O."/>
            <person name="Kashiwagi Y."/>
            <person name="Abe K."/>
            <person name="Gomi K."/>
            <person name="Horiuchi H."/>
            <person name="Kitamoto K."/>
            <person name="Kobayashi T."/>
            <person name="Takeuchi M."/>
            <person name="Denning D.W."/>
            <person name="Galagan J.E."/>
            <person name="Nierman W.C."/>
            <person name="Yu J."/>
            <person name="Archer D.B."/>
            <person name="Bennett J.W."/>
            <person name="Bhatnagar D."/>
            <person name="Cleveland T.E."/>
            <person name="Fedorova N.D."/>
            <person name="Gotoh O."/>
            <person name="Horikawa H."/>
            <person name="Hosoyama A."/>
            <person name="Ichinomiya M."/>
            <person name="Igarashi R."/>
            <person name="Iwashita K."/>
            <person name="Juvvadi P.R."/>
            <person name="Kato M."/>
            <person name="Kato Y."/>
            <person name="Kin T."/>
            <person name="Kokubun A."/>
            <person name="Maeda H."/>
            <person name="Maeyama N."/>
            <person name="Maruyama J."/>
            <person name="Nagasaki H."/>
            <person name="Nakajima T."/>
            <person name="Oda K."/>
            <person name="Okada K."/>
            <person name="Paulsen I."/>
            <person name="Sakamoto K."/>
            <person name="Sawano T."/>
            <person name="Takahashi M."/>
            <person name="Takase K."/>
            <person name="Terabayashi Y."/>
            <person name="Wortman J.R."/>
            <person name="Yamada O."/>
            <person name="Yamagata Y."/>
            <person name="Anazawa H."/>
            <person name="Hata Y."/>
            <person name="Koide Y."/>
            <person name="Komori T."/>
            <person name="Koyama Y."/>
            <person name="Minetoki T."/>
            <person name="Suharnan S."/>
            <person name="Tanaka A."/>
            <person name="Isono K."/>
            <person name="Kuhara S."/>
            <person name="Ogasawara N."/>
            <person name="Kikuchi H."/>
        </authorList>
    </citation>
    <scope>NUCLEOTIDE SEQUENCE [LARGE SCALE GENOMIC DNA]</scope>
    <source>
        <strain>ATCC 42149 / RIB 40</strain>
    </source>
</reference>
<gene>
    <name type="primary">atg3</name>
    <name type="ORF">AO090701000734</name>
</gene>
<comment type="function">
    <text evidence="1">E2 conjugating enzyme required for the cytoplasm to vacuole transport (Cvt) and autophagy. Required for selective autophagic degradation of the nucleus (nucleophagy) as well as for mitophagy which contributes to regulate mitochondrial quantity and quality by eliminating the mitochondria to a basal level to fulfill cellular energy requirements and preventing excess ROS production. Responsible for the E2-like covalent binding of phosphatidylethanolamine to the C-terminal Gly of atg8. The atg12-atg5 conjugate plays a role of an E3 and promotes the transfer of atg8 from atg3 to phosphatidylethanolamine (PE). This step is required for the membrane association of atg8. The formation of the atg8-phosphatidylethanolamine conjugate is essential for autophagy and for the cytoplasm to vacuole transport (Cvt). The atg8-PE conjugate mediates tethering between adjacent membranes and stimulates membrane hemifusion, leading to expansion of the autophagosomal membrane during autophagy (By similarity).</text>
</comment>
<comment type="subunit">
    <text evidence="1">Monomer. Interacts with atg8 through an intermediate thioester bond through the C-terminal Gly of atg8. Also interacts with the 40 amino acid C-terminal region of the E1-like atg7 enzyme. Also interacts with the atg12-atg5 conjugate.</text>
</comment>
<comment type="subcellular location">
    <subcellularLocation>
        <location evidence="1">Cytoplasm</location>
    </subcellularLocation>
</comment>
<comment type="domain">
    <text evidence="1">The N-terminal region is involved in phosphatidylethanolamine-binding and is required for atg8-PE conjugation.</text>
</comment>
<comment type="domain">
    <text evidence="1">The flexible region (FR) is required for atg7-binding.</text>
</comment>
<comment type="domain">
    <text evidence="1">The handle region (HR) contains the atg8 interaction motif (AIM) and mediates binding to atg8. It is crucial for the cytoplasm-to-vacuole targeting pathway (By similarity).</text>
</comment>
<comment type="similarity">
    <text evidence="3">Belongs to the ATG3 family.</text>
</comment>
<sequence>MNILHSTLSTWRDRLAPVSRTSTFRNTGQITPEEFVLAGDYLVYKFPSWSWADASNPAKRVSYLPPGKQFLVTRGVPCHRRLNDNFAGDAGHDDELVRDMLSGGTGGVDDDGWLRTGGGQDSADRQENRIKDVRTVDESGNMGEREEEEDEIPDMEDEDDDEEAIIRDPASGTTQPTRTYNLYITYSNFYRTPRLYMSGYLSPSEPLPPHLMMEDVVGDYKDKTVTLEDFPWYDGNVKMASVHPCRHASVMKTLLDRADAALKLRREKLKQAQSDPSKAPSVGESGLEGLVDDIKALSLSDQQQHGSDKSGGDEWEVLQHDEEEQVAIRVDQYLVVFLKFIASVTPGIEHDFTMGV</sequence>
<protein>
    <recommendedName>
        <fullName>Autophagy-related protein 3</fullName>
    </recommendedName>
    <alternativeName>
        <fullName>Autophagy-related E2-like conjugation enzyme atg3</fullName>
    </alternativeName>
</protein>
<name>ATG3_ASPOR</name>
<dbReference type="EMBL" id="BA000053">
    <property type="protein sequence ID" value="BAE62401.1"/>
    <property type="molecule type" value="Genomic_DNA"/>
</dbReference>
<dbReference type="RefSeq" id="XP_001823534.1">
    <property type="nucleotide sequence ID" value="XM_001823482.2"/>
</dbReference>
<dbReference type="SMR" id="Q2U7R4"/>
<dbReference type="STRING" id="510516.Q2U7R4"/>
<dbReference type="EnsemblFungi" id="BAE62401">
    <property type="protein sequence ID" value="BAE62401"/>
    <property type="gene ID" value="AO090701000734"/>
</dbReference>
<dbReference type="GeneID" id="5995591"/>
<dbReference type="KEGG" id="aor:AO090701000734"/>
<dbReference type="VEuPathDB" id="FungiDB:AO090701000734"/>
<dbReference type="HOGENOM" id="CLU_027518_2_0_1"/>
<dbReference type="OMA" id="HCPTWSW"/>
<dbReference type="OrthoDB" id="115809at5052"/>
<dbReference type="Proteomes" id="UP000006564">
    <property type="component" value="Chromosome 5"/>
</dbReference>
<dbReference type="GO" id="GO:0005829">
    <property type="term" value="C:cytosol"/>
    <property type="evidence" value="ECO:0007669"/>
    <property type="project" value="EnsemblFungi"/>
</dbReference>
<dbReference type="GO" id="GO:0005739">
    <property type="term" value="C:mitochondrion"/>
    <property type="evidence" value="ECO:0007669"/>
    <property type="project" value="EnsemblFungi"/>
</dbReference>
<dbReference type="GO" id="GO:0061908">
    <property type="term" value="C:phagophore"/>
    <property type="evidence" value="ECO:0007669"/>
    <property type="project" value="EnsemblFungi"/>
</dbReference>
<dbReference type="GO" id="GO:0000407">
    <property type="term" value="C:phagophore assembly site"/>
    <property type="evidence" value="ECO:0007669"/>
    <property type="project" value="EnsemblFungi"/>
</dbReference>
<dbReference type="GO" id="GO:0019776">
    <property type="term" value="F:Atg8-family ligase activity"/>
    <property type="evidence" value="ECO:0007669"/>
    <property type="project" value="EnsemblFungi"/>
</dbReference>
<dbReference type="GO" id="GO:0000045">
    <property type="term" value="P:autophagosome assembly"/>
    <property type="evidence" value="ECO:0007669"/>
    <property type="project" value="EnsemblFungi"/>
</dbReference>
<dbReference type="GO" id="GO:0000422">
    <property type="term" value="P:autophagy of mitochondrion"/>
    <property type="evidence" value="ECO:0007669"/>
    <property type="project" value="EnsemblFungi"/>
</dbReference>
<dbReference type="GO" id="GO:0061723">
    <property type="term" value="P:glycophagy"/>
    <property type="evidence" value="ECO:0007669"/>
    <property type="project" value="TreeGrafter"/>
</dbReference>
<dbReference type="GO" id="GO:0034727">
    <property type="term" value="P:piecemeal microautophagy of the nucleus"/>
    <property type="evidence" value="ECO:0007669"/>
    <property type="project" value="EnsemblFungi"/>
</dbReference>
<dbReference type="GO" id="GO:0006612">
    <property type="term" value="P:protein targeting to membrane"/>
    <property type="evidence" value="ECO:0007669"/>
    <property type="project" value="EnsemblFungi"/>
</dbReference>
<dbReference type="GO" id="GO:0015031">
    <property type="term" value="P:protein transport"/>
    <property type="evidence" value="ECO:0007669"/>
    <property type="project" value="UniProtKB-KW"/>
</dbReference>
<dbReference type="InterPro" id="IPR007135">
    <property type="entry name" value="Atg3/Atg10"/>
</dbReference>
<dbReference type="PANTHER" id="PTHR12866">
    <property type="entry name" value="UBIQUITIN-LIKE-CONJUGATING ENZYME ATG3"/>
    <property type="match status" value="1"/>
</dbReference>
<dbReference type="PANTHER" id="PTHR12866:SF2">
    <property type="entry name" value="UBIQUITIN-LIKE-CONJUGATING ENZYME ATG3"/>
    <property type="match status" value="1"/>
</dbReference>
<dbReference type="Pfam" id="PF03987">
    <property type="entry name" value="Autophagy_act_C"/>
    <property type="match status" value="1"/>
</dbReference>
<evidence type="ECO:0000250" key="1"/>
<evidence type="ECO:0000256" key="2">
    <source>
        <dbReference type="SAM" id="MobiDB-lite"/>
    </source>
</evidence>
<evidence type="ECO:0000305" key="3"/>
<accession>Q2U7R4</accession>
<organism>
    <name type="scientific">Aspergillus oryzae (strain ATCC 42149 / RIB 40)</name>
    <name type="common">Yellow koji mold</name>
    <dbReference type="NCBI Taxonomy" id="510516"/>
    <lineage>
        <taxon>Eukaryota</taxon>
        <taxon>Fungi</taxon>
        <taxon>Dikarya</taxon>
        <taxon>Ascomycota</taxon>
        <taxon>Pezizomycotina</taxon>
        <taxon>Eurotiomycetes</taxon>
        <taxon>Eurotiomycetidae</taxon>
        <taxon>Eurotiales</taxon>
        <taxon>Aspergillaceae</taxon>
        <taxon>Aspergillus</taxon>
        <taxon>Aspergillus subgen. Circumdati</taxon>
    </lineage>
</organism>
<keyword id="KW-0072">Autophagy</keyword>
<keyword id="KW-0963">Cytoplasm</keyword>
<keyword id="KW-0653">Protein transport</keyword>
<keyword id="KW-1185">Reference proteome</keyword>
<keyword id="KW-0813">Transport</keyword>
<keyword id="KW-0833">Ubl conjugation pathway</keyword>
<feature type="chain" id="PRO_0000317819" description="Autophagy-related protein 3">
    <location>
        <begin position="1"/>
        <end position="356"/>
    </location>
</feature>
<feature type="region of interest" description="Flexible region" evidence="1">
    <location>
        <begin position="85"/>
        <end position="174"/>
    </location>
</feature>
<feature type="region of interest" description="Disordered" evidence="2">
    <location>
        <begin position="108"/>
        <end position="160"/>
    </location>
</feature>
<feature type="region of interest" description="Handle region" evidence="1">
    <location>
        <begin position="249"/>
        <end position="332"/>
    </location>
</feature>
<feature type="compositionally biased region" description="Basic and acidic residues" evidence="2">
    <location>
        <begin position="122"/>
        <end position="137"/>
    </location>
</feature>
<feature type="compositionally biased region" description="Acidic residues" evidence="2">
    <location>
        <begin position="145"/>
        <end position="160"/>
    </location>
</feature>
<feature type="active site" description="Glycyl thioester intermediate" evidence="1">
    <location>
        <position position="245"/>
    </location>
</feature>